<gene>
    <name evidence="1" type="primary">ndhI</name>
</gene>
<comment type="function">
    <text evidence="1">NDH shuttles electrons from NAD(P)H:plastoquinone, via FMN and iron-sulfur (Fe-S) centers, to quinones in the photosynthetic chain and possibly in a chloroplast respiratory chain. The immediate electron acceptor for the enzyme in this species is believed to be plastoquinone. Couples the redox reaction to proton translocation, and thus conserves the redox energy in a proton gradient.</text>
</comment>
<comment type="catalytic activity">
    <reaction evidence="1">
        <text>a plastoquinone + NADH + (n+1) H(+)(in) = a plastoquinol + NAD(+) + n H(+)(out)</text>
        <dbReference type="Rhea" id="RHEA:42608"/>
        <dbReference type="Rhea" id="RHEA-COMP:9561"/>
        <dbReference type="Rhea" id="RHEA-COMP:9562"/>
        <dbReference type="ChEBI" id="CHEBI:15378"/>
        <dbReference type="ChEBI" id="CHEBI:17757"/>
        <dbReference type="ChEBI" id="CHEBI:57540"/>
        <dbReference type="ChEBI" id="CHEBI:57945"/>
        <dbReference type="ChEBI" id="CHEBI:62192"/>
    </reaction>
</comment>
<comment type="catalytic activity">
    <reaction evidence="1">
        <text>a plastoquinone + NADPH + (n+1) H(+)(in) = a plastoquinol + NADP(+) + n H(+)(out)</text>
        <dbReference type="Rhea" id="RHEA:42612"/>
        <dbReference type="Rhea" id="RHEA-COMP:9561"/>
        <dbReference type="Rhea" id="RHEA-COMP:9562"/>
        <dbReference type="ChEBI" id="CHEBI:15378"/>
        <dbReference type="ChEBI" id="CHEBI:17757"/>
        <dbReference type="ChEBI" id="CHEBI:57783"/>
        <dbReference type="ChEBI" id="CHEBI:58349"/>
        <dbReference type="ChEBI" id="CHEBI:62192"/>
    </reaction>
</comment>
<comment type="cofactor">
    <cofactor evidence="1">
        <name>[4Fe-4S] cluster</name>
        <dbReference type="ChEBI" id="CHEBI:49883"/>
    </cofactor>
    <text evidence="1">Binds 2 [4Fe-4S] clusters per subunit.</text>
</comment>
<comment type="subunit">
    <text evidence="1">NDH is composed of at least 16 different subunits, 5 of which are encoded in the nucleus.</text>
</comment>
<comment type="subcellular location">
    <subcellularLocation>
        <location evidence="1">Plastid</location>
        <location evidence="1">Chloroplast thylakoid membrane</location>
        <topology evidence="1">Peripheral membrane protein</topology>
    </subcellularLocation>
</comment>
<comment type="similarity">
    <text evidence="1">Belongs to the complex I 23 kDa subunit family.</text>
</comment>
<geneLocation type="chloroplast"/>
<keyword id="KW-0004">4Fe-4S</keyword>
<keyword id="KW-0150">Chloroplast</keyword>
<keyword id="KW-0408">Iron</keyword>
<keyword id="KW-0411">Iron-sulfur</keyword>
<keyword id="KW-0472">Membrane</keyword>
<keyword id="KW-0479">Metal-binding</keyword>
<keyword id="KW-0520">NAD</keyword>
<keyword id="KW-0521">NADP</keyword>
<keyword id="KW-0934">Plastid</keyword>
<keyword id="KW-0618">Plastoquinone</keyword>
<keyword id="KW-0874">Quinone</keyword>
<keyword id="KW-0677">Repeat</keyword>
<keyword id="KW-0793">Thylakoid</keyword>
<keyword id="KW-1278">Translocase</keyword>
<evidence type="ECO:0000255" key="1">
    <source>
        <dbReference type="HAMAP-Rule" id="MF_01351"/>
    </source>
</evidence>
<sequence>MLPMITEFINYGQQTIRAARYIGQGFMITLSHANRLPVTIQYPYEKLITSERFRGRIHFEFDKCIACEVCVRVCPIDLPVVDWKLETDIRKKRLLNYSIDFGICIFCGNCVEYCPTNCLSMTEEYELSTYDRHELNYNQIALGRLPMSVIDDYTIRTISNLPQIKNE</sequence>
<name>NDHI_ATRBE</name>
<organism>
    <name type="scientific">Atropa belladonna</name>
    <name type="common">Belladonna</name>
    <name type="synonym">Deadly nightshade</name>
    <dbReference type="NCBI Taxonomy" id="33113"/>
    <lineage>
        <taxon>Eukaryota</taxon>
        <taxon>Viridiplantae</taxon>
        <taxon>Streptophyta</taxon>
        <taxon>Embryophyta</taxon>
        <taxon>Tracheophyta</taxon>
        <taxon>Spermatophyta</taxon>
        <taxon>Magnoliopsida</taxon>
        <taxon>eudicotyledons</taxon>
        <taxon>Gunneridae</taxon>
        <taxon>Pentapetalae</taxon>
        <taxon>asterids</taxon>
        <taxon>lamiids</taxon>
        <taxon>Solanales</taxon>
        <taxon>Solanaceae</taxon>
        <taxon>Solanoideae</taxon>
        <taxon>Hyoscyameae</taxon>
        <taxon>Atropa</taxon>
    </lineage>
</organism>
<accession>Q7FNR7</accession>
<protein>
    <recommendedName>
        <fullName evidence="1">NAD(P)H-quinone oxidoreductase subunit I, chloroplastic</fullName>
        <ecNumber evidence="1">7.1.1.-</ecNumber>
    </recommendedName>
    <alternativeName>
        <fullName evidence="1">NAD(P)H dehydrogenase subunit I</fullName>
        <shortName evidence="1">NDH subunit I</shortName>
    </alternativeName>
    <alternativeName>
        <fullName evidence="1">NADH-plastoquinone oxidoreductase subunit I</fullName>
    </alternativeName>
</protein>
<dbReference type="EC" id="7.1.1.-" evidence="1"/>
<dbReference type="EMBL" id="AJ316582">
    <property type="protein sequence ID" value="CAC88100.1"/>
    <property type="molecule type" value="Genomic_DNA"/>
</dbReference>
<dbReference type="RefSeq" id="NP_783286.1">
    <property type="nucleotide sequence ID" value="NC_004561.1"/>
</dbReference>
<dbReference type="SMR" id="Q7FNR7"/>
<dbReference type="GeneID" id="806457"/>
<dbReference type="GO" id="GO:0009535">
    <property type="term" value="C:chloroplast thylakoid membrane"/>
    <property type="evidence" value="ECO:0007669"/>
    <property type="project" value="UniProtKB-SubCell"/>
</dbReference>
<dbReference type="GO" id="GO:0051539">
    <property type="term" value="F:4 iron, 4 sulfur cluster binding"/>
    <property type="evidence" value="ECO:0007669"/>
    <property type="project" value="UniProtKB-KW"/>
</dbReference>
<dbReference type="GO" id="GO:0005506">
    <property type="term" value="F:iron ion binding"/>
    <property type="evidence" value="ECO:0007669"/>
    <property type="project" value="UniProtKB-UniRule"/>
</dbReference>
<dbReference type="GO" id="GO:0008137">
    <property type="term" value="F:NADH dehydrogenase (ubiquinone) activity"/>
    <property type="evidence" value="ECO:0007669"/>
    <property type="project" value="InterPro"/>
</dbReference>
<dbReference type="GO" id="GO:0048038">
    <property type="term" value="F:quinone binding"/>
    <property type="evidence" value="ECO:0007669"/>
    <property type="project" value="UniProtKB-KW"/>
</dbReference>
<dbReference type="GO" id="GO:0019684">
    <property type="term" value="P:photosynthesis, light reaction"/>
    <property type="evidence" value="ECO:0007669"/>
    <property type="project" value="UniProtKB-UniRule"/>
</dbReference>
<dbReference type="FunFam" id="3.30.70.3270:FF:000006">
    <property type="entry name" value="NAD(P)H-quinone oxidoreductase subunit I, chloroplastic"/>
    <property type="match status" value="1"/>
</dbReference>
<dbReference type="Gene3D" id="3.30.70.3270">
    <property type="match status" value="1"/>
</dbReference>
<dbReference type="HAMAP" id="MF_01351">
    <property type="entry name" value="NDH1_NuoI"/>
    <property type="match status" value="1"/>
</dbReference>
<dbReference type="InterPro" id="IPR017896">
    <property type="entry name" value="4Fe4S_Fe-S-bd"/>
</dbReference>
<dbReference type="InterPro" id="IPR017900">
    <property type="entry name" value="4Fe4S_Fe_S_CS"/>
</dbReference>
<dbReference type="InterPro" id="IPR010226">
    <property type="entry name" value="NADH_quinone_OxRdtase_chainI"/>
</dbReference>
<dbReference type="InterPro" id="IPR004497">
    <property type="entry name" value="NDHI"/>
</dbReference>
<dbReference type="NCBIfam" id="TIGR00403">
    <property type="entry name" value="ndhI"/>
    <property type="match status" value="1"/>
</dbReference>
<dbReference type="NCBIfam" id="TIGR01971">
    <property type="entry name" value="NuoI"/>
    <property type="match status" value="1"/>
</dbReference>
<dbReference type="NCBIfam" id="NF004537">
    <property type="entry name" value="PRK05888.1-3"/>
    <property type="match status" value="1"/>
</dbReference>
<dbReference type="PANTHER" id="PTHR47275">
    <property type="entry name" value="NAD(P)H-QUINONE OXIDOREDUCTASE SUBUNIT I, CHLOROPLASTIC"/>
    <property type="match status" value="1"/>
</dbReference>
<dbReference type="PANTHER" id="PTHR47275:SF1">
    <property type="entry name" value="NAD(P)H-QUINONE OXIDOREDUCTASE SUBUNIT I, CHLOROPLASTIC"/>
    <property type="match status" value="1"/>
</dbReference>
<dbReference type="Pfam" id="PF00037">
    <property type="entry name" value="Fer4"/>
    <property type="match status" value="2"/>
</dbReference>
<dbReference type="SUPFAM" id="SSF54862">
    <property type="entry name" value="4Fe-4S ferredoxins"/>
    <property type="match status" value="1"/>
</dbReference>
<dbReference type="PROSITE" id="PS00198">
    <property type="entry name" value="4FE4S_FER_1"/>
    <property type="match status" value="2"/>
</dbReference>
<dbReference type="PROSITE" id="PS51379">
    <property type="entry name" value="4FE4S_FER_2"/>
    <property type="match status" value="2"/>
</dbReference>
<feature type="chain" id="PRO_0000245652" description="NAD(P)H-quinone oxidoreductase subunit I, chloroplastic">
    <location>
        <begin position="1"/>
        <end position="167"/>
    </location>
</feature>
<feature type="domain" description="4Fe-4S ferredoxin-type 1" evidence="1">
    <location>
        <begin position="55"/>
        <end position="84"/>
    </location>
</feature>
<feature type="domain" description="4Fe-4S ferredoxin-type 2" evidence="1">
    <location>
        <begin position="95"/>
        <end position="124"/>
    </location>
</feature>
<feature type="binding site" evidence="1">
    <location>
        <position position="64"/>
    </location>
    <ligand>
        <name>[4Fe-4S] cluster</name>
        <dbReference type="ChEBI" id="CHEBI:49883"/>
        <label>1</label>
    </ligand>
</feature>
<feature type="binding site" evidence="1">
    <location>
        <position position="67"/>
    </location>
    <ligand>
        <name>[4Fe-4S] cluster</name>
        <dbReference type="ChEBI" id="CHEBI:49883"/>
        <label>1</label>
    </ligand>
</feature>
<feature type="binding site" evidence="1">
    <location>
        <position position="70"/>
    </location>
    <ligand>
        <name>[4Fe-4S] cluster</name>
        <dbReference type="ChEBI" id="CHEBI:49883"/>
        <label>1</label>
    </ligand>
</feature>
<feature type="binding site" evidence="1">
    <location>
        <position position="74"/>
    </location>
    <ligand>
        <name>[4Fe-4S] cluster</name>
        <dbReference type="ChEBI" id="CHEBI:49883"/>
        <label>2</label>
    </ligand>
</feature>
<feature type="binding site" evidence="1">
    <location>
        <position position="104"/>
    </location>
    <ligand>
        <name>[4Fe-4S] cluster</name>
        <dbReference type="ChEBI" id="CHEBI:49883"/>
        <label>2</label>
    </ligand>
</feature>
<feature type="binding site" evidence="1">
    <location>
        <position position="107"/>
    </location>
    <ligand>
        <name>[4Fe-4S] cluster</name>
        <dbReference type="ChEBI" id="CHEBI:49883"/>
        <label>2</label>
    </ligand>
</feature>
<feature type="binding site" evidence="1">
    <location>
        <position position="110"/>
    </location>
    <ligand>
        <name>[4Fe-4S] cluster</name>
        <dbReference type="ChEBI" id="CHEBI:49883"/>
        <label>2</label>
    </ligand>
</feature>
<feature type="binding site" evidence="1">
    <location>
        <position position="114"/>
    </location>
    <ligand>
        <name>[4Fe-4S] cluster</name>
        <dbReference type="ChEBI" id="CHEBI:49883"/>
        <label>1</label>
    </ligand>
</feature>
<reference key="1">
    <citation type="journal article" date="2002" name="Mol. Biol. Evol.">
        <title>The plastid chromosome of Atropa belladonna and its comparison with that of Nicotiana tabacum: the role of RNA editing in generating divergence in the process of plant speciation.</title>
        <authorList>
            <person name="Schmitz-Linneweber C."/>
            <person name="Regel R."/>
            <person name="Du T.G."/>
            <person name="Hupfer H."/>
            <person name="Herrmann R.G."/>
            <person name="Maier R.M."/>
        </authorList>
    </citation>
    <scope>NUCLEOTIDE SEQUENCE [LARGE SCALE GENOMIC DNA]</scope>
    <source>
        <strain>cv. Ab5p(kan)</strain>
    </source>
</reference>
<proteinExistence type="inferred from homology"/>